<dbReference type="EMBL" id="D38231">
    <property type="protein sequence ID" value="BAA07404.1"/>
    <property type="molecule type" value="mRNA"/>
</dbReference>
<dbReference type="EMBL" id="AP003452">
    <property type="status" value="NOT_ANNOTATED_CDS"/>
    <property type="molecule type" value="Genomic_DNA"/>
</dbReference>
<dbReference type="EMBL" id="AP008207">
    <property type="protein sequence ID" value="BAF05824.1"/>
    <property type="molecule type" value="Genomic_DNA"/>
</dbReference>
<dbReference type="EMBL" id="AP014957">
    <property type="protein sequence ID" value="BAS73760.1"/>
    <property type="molecule type" value="Genomic_DNA"/>
</dbReference>
<dbReference type="EMBL" id="CM000138">
    <property type="protein sequence ID" value="EAZ13132.1"/>
    <property type="molecule type" value="Genomic_DNA"/>
</dbReference>
<dbReference type="EMBL" id="AK060428">
    <property type="protein sequence ID" value="BAG87442.1"/>
    <property type="molecule type" value="mRNA"/>
</dbReference>
<dbReference type="EMBL" id="AK098893">
    <property type="protein sequence ID" value="BAG93799.1"/>
    <property type="molecule type" value="mRNA"/>
</dbReference>
<dbReference type="EMBL" id="AK121587">
    <property type="protein sequence ID" value="BAH00562.1"/>
    <property type="molecule type" value="mRNA"/>
</dbReference>
<dbReference type="PIR" id="T03764">
    <property type="entry name" value="T03764"/>
</dbReference>
<dbReference type="RefSeq" id="XP_015620921.1">
    <property type="nucleotide sequence ID" value="XM_015765435.1"/>
</dbReference>
<dbReference type="SMR" id="P49027"/>
<dbReference type="FunCoup" id="P49027">
    <property type="interactions" value="2601"/>
</dbReference>
<dbReference type="STRING" id="39947.P49027"/>
<dbReference type="PaxDb" id="39947-P49027"/>
<dbReference type="EnsemblPlants" id="Os01t0686800-01">
    <property type="protein sequence ID" value="Os01t0686800-01"/>
    <property type="gene ID" value="Os01g0686800"/>
</dbReference>
<dbReference type="EnsemblPlants" id="Os01t0686800-02">
    <property type="protein sequence ID" value="Os01t0686800-02"/>
    <property type="gene ID" value="Os01g0686800"/>
</dbReference>
<dbReference type="Gramene" id="Os01t0686800-01">
    <property type="protein sequence ID" value="Os01t0686800-01"/>
    <property type="gene ID" value="Os01g0686800"/>
</dbReference>
<dbReference type="Gramene" id="Os01t0686800-02">
    <property type="protein sequence ID" value="Os01t0686800-02"/>
    <property type="gene ID" value="Os01g0686800"/>
</dbReference>
<dbReference type="KEGG" id="dosa:Os01g0686800"/>
<dbReference type="eggNOG" id="KOG0279">
    <property type="taxonomic scope" value="Eukaryota"/>
</dbReference>
<dbReference type="HOGENOM" id="CLU_000288_57_7_1"/>
<dbReference type="InParanoid" id="P49027"/>
<dbReference type="OMA" id="DGHKEWI"/>
<dbReference type="OrthoDB" id="7875889at2759"/>
<dbReference type="Proteomes" id="UP000000763">
    <property type="component" value="Chromosome 1"/>
</dbReference>
<dbReference type="Proteomes" id="UP000007752">
    <property type="component" value="Chromosome 1"/>
</dbReference>
<dbReference type="Proteomes" id="UP000059680">
    <property type="component" value="Chromosome 1"/>
</dbReference>
<dbReference type="GO" id="GO:0005737">
    <property type="term" value="C:cytoplasm"/>
    <property type="evidence" value="ECO:0000314"/>
    <property type="project" value="UniProtKB"/>
</dbReference>
<dbReference type="GO" id="GO:0005829">
    <property type="term" value="C:cytosol"/>
    <property type="evidence" value="ECO:0000318"/>
    <property type="project" value="GO_Central"/>
</dbReference>
<dbReference type="GO" id="GO:0005634">
    <property type="term" value="C:nucleus"/>
    <property type="evidence" value="ECO:0000318"/>
    <property type="project" value="GO_Central"/>
</dbReference>
<dbReference type="GO" id="GO:0005886">
    <property type="term" value="C:plasma membrane"/>
    <property type="evidence" value="ECO:0000314"/>
    <property type="project" value="UniProtKB"/>
</dbReference>
<dbReference type="GO" id="GO:1990904">
    <property type="term" value="C:ribonucleoprotein complex"/>
    <property type="evidence" value="ECO:0007669"/>
    <property type="project" value="UniProtKB-KW"/>
</dbReference>
<dbReference type="GO" id="GO:0005840">
    <property type="term" value="C:ribosome"/>
    <property type="evidence" value="ECO:0007669"/>
    <property type="project" value="UniProtKB-KW"/>
</dbReference>
<dbReference type="GO" id="GO:0005080">
    <property type="term" value="F:protein kinase C binding"/>
    <property type="evidence" value="ECO:0000318"/>
    <property type="project" value="GO_Central"/>
</dbReference>
<dbReference type="GO" id="GO:0043022">
    <property type="term" value="F:ribosome binding"/>
    <property type="evidence" value="ECO:0000318"/>
    <property type="project" value="GO_Central"/>
</dbReference>
<dbReference type="GO" id="GO:0045182">
    <property type="term" value="F:translation regulator activity"/>
    <property type="evidence" value="ECO:0007669"/>
    <property type="project" value="InterPro"/>
</dbReference>
<dbReference type="GO" id="GO:0050832">
    <property type="term" value="P:defense response to fungus"/>
    <property type="evidence" value="ECO:0000315"/>
    <property type="project" value="UniProtKB"/>
</dbReference>
<dbReference type="GO" id="GO:2001125">
    <property type="term" value="P:negative regulation of translational frameshifting"/>
    <property type="evidence" value="ECO:0000318"/>
    <property type="project" value="GO_Central"/>
</dbReference>
<dbReference type="GO" id="GO:0060267">
    <property type="term" value="P:positive regulation of respiratory burst"/>
    <property type="evidence" value="ECO:0000315"/>
    <property type="project" value="UniProtKB"/>
</dbReference>
<dbReference type="GO" id="GO:0072344">
    <property type="term" value="P:rescue of stalled ribosome"/>
    <property type="evidence" value="ECO:0000318"/>
    <property type="project" value="GO_Central"/>
</dbReference>
<dbReference type="GO" id="GO:0007165">
    <property type="term" value="P:signal transduction"/>
    <property type="evidence" value="ECO:0007669"/>
    <property type="project" value="UniProtKB-KW"/>
</dbReference>
<dbReference type="CDD" id="cd00200">
    <property type="entry name" value="WD40"/>
    <property type="match status" value="1"/>
</dbReference>
<dbReference type="FunFam" id="2.130.10.10:FF:000018">
    <property type="entry name" value="Receptor for activated C kinase 1"/>
    <property type="match status" value="1"/>
</dbReference>
<dbReference type="Gene3D" id="2.130.10.10">
    <property type="entry name" value="YVTN repeat-like/Quinoprotein amine dehydrogenase"/>
    <property type="match status" value="1"/>
</dbReference>
<dbReference type="InterPro" id="IPR020472">
    <property type="entry name" value="G-protein_beta_WD-40_rep"/>
</dbReference>
<dbReference type="InterPro" id="IPR045223">
    <property type="entry name" value="RACK1-like"/>
</dbReference>
<dbReference type="InterPro" id="IPR015943">
    <property type="entry name" value="WD40/YVTN_repeat-like_dom_sf"/>
</dbReference>
<dbReference type="InterPro" id="IPR019775">
    <property type="entry name" value="WD40_repeat_CS"/>
</dbReference>
<dbReference type="InterPro" id="IPR036322">
    <property type="entry name" value="WD40_repeat_dom_sf"/>
</dbReference>
<dbReference type="InterPro" id="IPR001680">
    <property type="entry name" value="WD40_rpt"/>
</dbReference>
<dbReference type="PANTHER" id="PTHR19868">
    <property type="entry name" value="RECEPTOR FOR ACTIVATED PROTEIN KINASE C RACK1"/>
    <property type="match status" value="1"/>
</dbReference>
<dbReference type="Pfam" id="PF00400">
    <property type="entry name" value="WD40"/>
    <property type="match status" value="7"/>
</dbReference>
<dbReference type="PRINTS" id="PR00320">
    <property type="entry name" value="GPROTEINBRPT"/>
</dbReference>
<dbReference type="SMART" id="SM00320">
    <property type="entry name" value="WD40"/>
    <property type="match status" value="7"/>
</dbReference>
<dbReference type="SUPFAM" id="SSF50978">
    <property type="entry name" value="WD40 repeat-like"/>
    <property type="match status" value="1"/>
</dbReference>
<dbReference type="PROSITE" id="PS00678">
    <property type="entry name" value="WD_REPEATS_1"/>
    <property type="match status" value="5"/>
</dbReference>
<dbReference type="PROSITE" id="PS50082">
    <property type="entry name" value="WD_REPEATS_2"/>
    <property type="match status" value="5"/>
</dbReference>
<dbReference type="PROSITE" id="PS50294">
    <property type="entry name" value="WD_REPEATS_REGION"/>
    <property type="match status" value="1"/>
</dbReference>
<reference key="1">
    <citation type="journal article" date="1995" name="Plant Cell Physiol.">
        <title>Molecular cloning and characterization of cDNA for a rice protein that contains seven repetitive segments of the Trp-Asp forty-amino-acid repeat (WD-40 repeat).</title>
        <authorList>
            <person name="Iwasaki Y."/>
            <person name="Komano M."/>
            <person name="Ishikawa A."/>
            <person name="Sasaki T."/>
            <person name="Asahi T."/>
        </authorList>
    </citation>
    <scope>NUCLEOTIDE SEQUENCE [MRNA]</scope>
    <source>
        <strain>cv. Nipponbare</strain>
        <tissue>Leaf</tissue>
    </source>
</reference>
<reference key="2">
    <citation type="journal article" date="2002" name="Nature">
        <title>The genome sequence and structure of rice chromosome 1.</title>
        <authorList>
            <person name="Sasaki T."/>
            <person name="Matsumoto T."/>
            <person name="Yamamoto K."/>
            <person name="Sakata K."/>
            <person name="Baba T."/>
            <person name="Katayose Y."/>
            <person name="Wu J."/>
            <person name="Niimura Y."/>
            <person name="Cheng Z."/>
            <person name="Nagamura Y."/>
            <person name="Antonio B.A."/>
            <person name="Kanamori H."/>
            <person name="Hosokawa S."/>
            <person name="Masukawa M."/>
            <person name="Arikawa K."/>
            <person name="Chiden Y."/>
            <person name="Hayashi M."/>
            <person name="Okamoto M."/>
            <person name="Ando T."/>
            <person name="Aoki H."/>
            <person name="Arita K."/>
            <person name="Hamada M."/>
            <person name="Harada C."/>
            <person name="Hijishita S."/>
            <person name="Honda M."/>
            <person name="Ichikawa Y."/>
            <person name="Idonuma A."/>
            <person name="Iijima M."/>
            <person name="Ikeda M."/>
            <person name="Ikeno M."/>
            <person name="Ito S."/>
            <person name="Ito T."/>
            <person name="Ito Y."/>
            <person name="Ito Y."/>
            <person name="Iwabuchi A."/>
            <person name="Kamiya K."/>
            <person name="Karasawa W."/>
            <person name="Katagiri S."/>
            <person name="Kikuta A."/>
            <person name="Kobayashi N."/>
            <person name="Kono I."/>
            <person name="Machita K."/>
            <person name="Maehara T."/>
            <person name="Mizuno H."/>
            <person name="Mizubayashi T."/>
            <person name="Mukai Y."/>
            <person name="Nagasaki H."/>
            <person name="Nakashima M."/>
            <person name="Nakama Y."/>
            <person name="Nakamichi Y."/>
            <person name="Nakamura M."/>
            <person name="Namiki N."/>
            <person name="Negishi M."/>
            <person name="Ohta I."/>
            <person name="Ono N."/>
            <person name="Saji S."/>
            <person name="Sakai K."/>
            <person name="Shibata M."/>
            <person name="Shimokawa T."/>
            <person name="Shomura A."/>
            <person name="Song J."/>
            <person name="Takazaki Y."/>
            <person name="Terasawa K."/>
            <person name="Tsuji K."/>
            <person name="Waki K."/>
            <person name="Yamagata H."/>
            <person name="Yamane H."/>
            <person name="Yoshiki S."/>
            <person name="Yoshihara R."/>
            <person name="Yukawa K."/>
            <person name="Zhong H."/>
            <person name="Iwama H."/>
            <person name="Endo T."/>
            <person name="Ito H."/>
            <person name="Hahn J.H."/>
            <person name="Kim H.-I."/>
            <person name="Eun M.-Y."/>
            <person name="Yano M."/>
            <person name="Jiang J."/>
            <person name="Gojobori T."/>
        </authorList>
    </citation>
    <scope>NUCLEOTIDE SEQUENCE [LARGE SCALE GENOMIC DNA]</scope>
    <source>
        <strain>cv. Nipponbare</strain>
    </source>
</reference>
<reference key="3">
    <citation type="journal article" date="2005" name="Nature">
        <title>The map-based sequence of the rice genome.</title>
        <authorList>
            <consortium name="International rice genome sequencing project (IRGSP)"/>
        </authorList>
    </citation>
    <scope>NUCLEOTIDE SEQUENCE [LARGE SCALE GENOMIC DNA]</scope>
    <source>
        <strain>cv. Nipponbare</strain>
    </source>
</reference>
<reference key="4">
    <citation type="journal article" date="2008" name="Nucleic Acids Res.">
        <title>The rice annotation project database (RAP-DB): 2008 update.</title>
        <authorList>
            <consortium name="The rice annotation project (RAP)"/>
        </authorList>
    </citation>
    <scope>GENOME REANNOTATION</scope>
    <source>
        <strain>cv. Nipponbare</strain>
    </source>
</reference>
<reference key="5">
    <citation type="journal article" date="2013" name="Rice">
        <title>Improvement of the Oryza sativa Nipponbare reference genome using next generation sequence and optical map data.</title>
        <authorList>
            <person name="Kawahara Y."/>
            <person name="de la Bastide M."/>
            <person name="Hamilton J.P."/>
            <person name="Kanamori H."/>
            <person name="McCombie W.R."/>
            <person name="Ouyang S."/>
            <person name="Schwartz D.C."/>
            <person name="Tanaka T."/>
            <person name="Wu J."/>
            <person name="Zhou S."/>
            <person name="Childs K.L."/>
            <person name="Davidson R.M."/>
            <person name="Lin H."/>
            <person name="Quesada-Ocampo L."/>
            <person name="Vaillancourt B."/>
            <person name="Sakai H."/>
            <person name="Lee S.S."/>
            <person name="Kim J."/>
            <person name="Numa H."/>
            <person name="Itoh T."/>
            <person name="Buell C.R."/>
            <person name="Matsumoto T."/>
        </authorList>
    </citation>
    <scope>GENOME REANNOTATION</scope>
    <source>
        <strain>cv. Nipponbare</strain>
    </source>
</reference>
<reference key="6">
    <citation type="journal article" date="2005" name="PLoS Biol.">
        <title>The genomes of Oryza sativa: a history of duplications.</title>
        <authorList>
            <person name="Yu J."/>
            <person name="Wang J."/>
            <person name="Lin W."/>
            <person name="Li S."/>
            <person name="Li H."/>
            <person name="Zhou J."/>
            <person name="Ni P."/>
            <person name="Dong W."/>
            <person name="Hu S."/>
            <person name="Zeng C."/>
            <person name="Zhang J."/>
            <person name="Zhang Y."/>
            <person name="Li R."/>
            <person name="Xu Z."/>
            <person name="Li S."/>
            <person name="Li X."/>
            <person name="Zheng H."/>
            <person name="Cong L."/>
            <person name="Lin L."/>
            <person name="Yin J."/>
            <person name="Geng J."/>
            <person name="Li G."/>
            <person name="Shi J."/>
            <person name="Liu J."/>
            <person name="Lv H."/>
            <person name="Li J."/>
            <person name="Wang J."/>
            <person name="Deng Y."/>
            <person name="Ran L."/>
            <person name="Shi X."/>
            <person name="Wang X."/>
            <person name="Wu Q."/>
            <person name="Li C."/>
            <person name="Ren X."/>
            <person name="Wang J."/>
            <person name="Wang X."/>
            <person name="Li D."/>
            <person name="Liu D."/>
            <person name="Zhang X."/>
            <person name="Ji Z."/>
            <person name="Zhao W."/>
            <person name="Sun Y."/>
            <person name="Zhang Z."/>
            <person name="Bao J."/>
            <person name="Han Y."/>
            <person name="Dong L."/>
            <person name="Ji J."/>
            <person name="Chen P."/>
            <person name="Wu S."/>
            <person name="Liu J."/>
            <person name="Xiao Y."/>
            <person name="Bu D."/>
            <person name="Tan J."/>
            <person name="Yang L."/>
            <person name="Ye C."/>
            <person name="Zhang J."/>
            <person name="Xu J."/>
            <person name="Zhou Y."/>
            <person name="Yu Y."/>
            <person name="Zhang B."/>
            <person name="Zhuang S."/>
            <person name="Wei H."/>
            <person name="Liu B."/>
            <person name="Lei M."/>
            <person name="Yu H."/>
            <person name="Li Y."/>
            <person name="Xu H."/>
            <person name="Wei S."/>
            <person name="He X."/>
            <person name="Fang L."/>
            <person name="Zhang Z."/>
            <person name="Zhang Y."/>
            <person name="Huang X."/>
            <person name="Su Z."/>
            <person name="Tong W."/>
            <person name="Li J."/>
            <person name="Tong Z."/>
            <person name="Li S."/>
            <person name="Ye J."/>
            <person name="Wang L."/>
            <person name="Fang L."/>
            <person name="Lei T."/>
            <person name="Chen C.-S."/>
            <person name="Chen H.-C."/>
            <person name="Xu Z."/>
            <person name="Li H."/>
            <person name="Huang H."/>
            <person name="Zhang F."/>
            <person name="Xu H."/>
            <person name="Li N."/>
            <person name="Zhao C."/>
            <person name="Li S."/>
            <person name="Dong L."/>
            <person name="Huang Y."/>
            <person name="Li L."/>
            <person name="Xi Y."/>
            <person name="Qi Q."/>
            <person name="Li W."/>
            <person name="Zhang B."/>
            <person name="Hu W."/>
            <person name="Zhang Y."/>
            <person name="Tian X."/>
            <person name="Jiao Y."/>
            <person name="Liang X."/>
            <person name="Jin J."/>
            <person name="Gao L."/>
            <person name="Zheng W."/>
            <person name="Hao B."/>
            <person name="Liu S.-M."/>
            <person name="Wang W."/>
            <person name="Yuan L."/>
            <person name="Cao M."/>
            <person name="McDermott J."/>
            <person name="Samudrala R."/>
            <person name="Wang J."/>
            <person name="Wong G.K.-S."/>
            <person name="Yang H."/>
        </authorList>
    </citation>
    <scope>NUCLEOTIDE SEQUENCE [LARGE SCALE GENOMIC DNA]</scope>
    <source>
        <strain>cv. Nipponbare</strain>
    </source>
</reference>
<reference key="7">
    <citation type="journal article" date="2003" name="Science">
        <title>Collection, mapping, and annotation of over 28,000 cDNA clones from japonica rice.</title>
        <authorList>
            <consortium name="The rice full-length cDNA consortium"/>
        </authorList>
    </citation>
    <scope>NUCLEOTIDE SEQUENCE [LARGE SCALE MRNA]</scope>
    <source>
        <strain>cv. Nipponbare</strain>
    </source>
</reference>
<reference key="8">
    <citation type="journal article" date="2004" name="Nucleic Acids Res.">
        <title>Rice proteome database based on two-dimensional polyacrylamide gel electrophoresis: its status in 2003.</title>
        <authorList>
            <person name="Komatsu S."/>
            <person name="Kojima K."/>
            <person name="Suzuki K."/>
            <person name="Ozaki K."/>
            <person name="Higo K."/>
        </authorList>
    </citation>
    <scope>PROTEIN SEQUENCE OF 7-16</scope>
    <source>
        <strain>cv. Nipponbare</strain>
        <tissue>Embryo</tissue>
    </source>
</reference>
<reference key="9">
    <citation type="journal article" date="2008" name="Plant Cell">
        <title>RACK1 functions in rice innate immunity by interacting with the Rac1 immune complex.</title>
        <authorList>
            <person name="Nakashima A."/>
            <person name="Chen L."/>
            <person name="Thao N.P."/>
            <person name="Fujiwara M."/>
            <person name="Wong H.L."/>
            <person name="Kuwano M."/>
            <person name="Umemura K."/>
            <person name="Shirasu K."/>
            <person name="Kawasaki T."/>
            <person name="Shimamoto K."/>
        </authorList>
    </citation>
    <scope>FUNCTION</scope>
    <scope>SUBUNIT</scope>
    <scope>INTERACTION WITH RAC1; RAC3; RAC6; RAR1; SGT1 AND RBOHB</scope>
    <scope>SUBCELLULAR LOCATION</scope>
    <scope>INDUCTION</scope>
    <scope>IDENTIFICATION BY MASS SPECTROMETRY</scope>
</reference>
<proteinExistence type="evidence at protein level"/>
<accession>P49027</accession>
<accession>A0A0P0V6R3</accession>
<accession>Q0JKA4</accession>
<evidence type="ECO:0000269" key="1">
    <source>
    </source>
</evidence>
<evidence type="ECO:0000305" key="2"/>
<evidence type="ECO:0000305" key="3">
    <source>
    </source>
</evidence>
<name>GBLPA_ORYSJ</name>
<organism>
    <name type="scientific">Oryza sativa subsp. japonica</name>
    <name type="common">Rice</name>
    <dbReference type="NCBI Taxonomy" id="39947"/>
    <lineage>
        <taxon>Eukaryota</taxon>
        <taxon>Viridiplantae</taxon>
        <taxon>Streptophyta</taxon>
        <taxon>Embryophyta</taxon>
        <taxon>Tracheophyta</taxon>
        <taxon>Spermatophyta</taxon>
        <taxon>Magnoliopsida</taxon>
        <taxon>Liliopsida</taxon>
        <taxon>Poales</taxon>
        <taxon>Poaceae</taxon>
        <taxon>BOP clade</taxon>
        <taxon>Oryzoideae</taxon>
        <taxon>Oryzeae</taxon>
        <taxon>Oryzinae</taxon>
        <taxon>Oryza</taxon>
        <taxon>Oryza sativa</taxon>
    </lineage>
</organism>
<sequence length="334" mass="36232">MAGAQESLVLAGVMHGHNDVVTAIATPIDNSPFIVSSSRDKSLLVWDLTNPVQNVGEGAGASEYGVPFRRLTGHSHFVQDVVLSSDGQFALSGSWDGELRLWDLSTGVTTRRFVGHDKDVLSVAFSVDNRQIVSASRDRTIKLWNTLGECKYTIGGDLGGGEGHNGWVSCVRFSPNTFQPTIVSGSWDRTVKVWNLTNCKLRCNLEGHGGYVNAVAVSPDGSLCASGGKDGVTLLWDLAEGKRLYSLDAGSIIHSLCFSPNRYWLCAATQDSIKIWDLESKHIVQDLKPEIPVSKNQMLYCTSLNWSADGSTLYAGYTDGTIRIYKISGFSYAG</sequence>
<gene>
    <name type="primary">RACK1A</name>
    <name type="ordered locus">Os01g0686800</name>
    <name type="ordered locus">LOC_Os01g49290</name>
</gene>
<keyword id="KW-1003">Cell membrane</keyword>
<keyword id="KW-0963">Cytoplasm</keyword>
<keyword id="KW-0903">Direct protein sequencing</keyword>
<keyword id="KW-0472">Membrane</keyword>
<keyword id="KW-0611">Plant defense</keyword>
<keyword id="KW-1185">Reference proteome</keyword>
<keyword id="KW-0677">Repeat</keyword>
<keyword id="KW-0687">Ribonucleoprotein</keyword>
<keyword id="KW-0689">Ribosomal protein</keyword>
<keyword id="KW-0807">Transducer</keyword>
<keyword id="KW-0853">WD repeat</keyword>
<protein>
    <recommendedName>
        <fullName evidence="2">Small ribosomal subunit protein RACK1z</fullName>
    </recommendedName>
    <alternativeName>
        <fullName>Guanine nucleotide-binding protein subunit beta-like protein A</fullName>
        <shortName>GPB-LR</shortName>
    </alternativeName>
    <alternativeName>
        <fullName>RWD</fullName>
    </alternativeName>
    <alternativeName>
        <fullName>Receptor for activated C kinase 1A</fullName>
    </alternativeName>
</protein>
<feature type="chain" id="PRO_0000127753" description="Small ribosomal subunit protein RACK1z">
    <location>
        <begin position="1"/>
        <end position="334"/>
    </location>
</feature>
<feature type="repeat" description="WD 1">
    <location>
        <begin position="16"/>
        <end position="47"/>
    </location>
</feature>
<feature type="repeat" description="WD 2">
    <location>
        <begin position="73"/>
        <end position="103"/>
    </location>
</feature>
<feature type="repeat" description="WD 3">
    <location>
        <begin position="115"/>
        <end position="145"/>
    </location>
</feature>
<feature type="repeat" description="WD 4">
    <location>
        <begin position="163"/>
        <end position="195"/>
    </location>
</feature>
<feature type="repeat" description="WD 5">
    <location>
        <begin position="207"/>
        <end position="237"/>
    </location>
</feature>
<feature type="repeat" description="WD 6">
    <location>
        <begin position="248"/>
        <end position="277"/>
    </location>
</feature>
<feature type="repeat" description="WD 7">
    <location>
        <begin position="296"/>
        <end position="326"/>
    </location>
</feature>
<comment type="function">
    <text evidence="1">Component of the RACK1 regulatory proteins that functions in innate immunity by interacting with multiple proteins in the RAC1 immune complex. Acts as a positive regulator of reactive oxygen species (ROS) production and is required for resistance against rice blast (M.grisea) infection.</text>
</comment>
<comment type="subunit">
    <text evidence="3">Interacts with RAC1, RAC3, RAC6, RAR1, SGT1 and RBOHB. Homodimer and heterodimer with RACK1B (Probable).</text>
</comment>
<comment type="subcellular location">
    <subcellularLocation>
        <location evidence="1">Cytoplasm</location>
    </subcellularLocation>
    <subcellularLocation>
        <location evidence="1">Cell membrane</location>
    </subcellularLocation>
    <text>Predominantly found in the cytoplasm.</text>
</comment>
<comment type="tissue specificity">
    <text>Widely expressed.</text>
</comment>
<comment type="induction">
    <text evidence="1">By auxin, abscisic acid (ABA) and jasmonic acid (JA).</text>
</comment>
<comment type="similarity">
    <text evidence="2">Belongs to the WD repeat G protein beta family. Ribosomal protein RACK1 subfamily.</text>
</comment>